<protein>
    <recommendedName>
        <fullName evidence="7">HTH-type quorum sensing-dependent transcriptional regulator VjbR</fullName>
    </recommendedName>
</protein>
<proteinExistence type="evidence at protein level"/>
<gene>
    <name type="primary">vjbR</name>
    <name type="ordered locus">BAB2_0118</name>
</gene>
<name>VJBR_BRUA2</name>
<organism>
    <name type="scientific">Brucella abortus (strain 2308)</name>
    <dbReference type="NCBI Taxonomy" id="359391"/>
    <lineage>
        <taxon>Bacteria</taxon>
        <taxon>Pseudomonadati</taxon>
        <taxon>Pseudomonadota</taxon>
        <taxon>Alphaproteobacteria</taxon>
        <taxon>Hyphomicrobiales</taxon>
        <taxon>Brucellaceae</taxon>
        <taxon>Brucella/Ochrobactrum group</taxon>
        <taxon>Brucella</taxon>
    </lineage>
</organism>
<comment type="function">
    <text evidence="1 6">Transcriptional regulator involved in the global control of Brucella gene expression (PubMed:28334833). Mediates the effects of the quorum sensing autoinducer C12-HSL (N-dodecanoyl-homoserine lactone) on a large and diverse number of genes (By similarity). Binds with high specificity to a large number of sites distributed across the genome. The VjbR-binding motif contains an asymmetric 16-bp consensus sequence, an unusual feature among LuxR-type regulators (PubMed:28334833). May directly modulate expression of many genes, including virulence determinants, components of the respiratory chain, efflux systems, elements predicted to participate in ion transport and adaptation to stress, uncharacterized proteins, as well as transcriptional regulators probably responsible for the observed indirect VjbR-mediated effects (PubMed:28334833).</text>
</comment>
<comment type="induction">
    <text evidence="5">Regulated at the post-transcriptional level. In rich medium, protein is expressed only in the stationary phase of growth. In minimal medium, protein is expressed only at pH 5.5 in the presence of urocanic acid.</text>
</comment>
<comment type="miscellaneous">
    <text evidence="4">A B.abortus vjbR deletion mutant complemented with the defective B.melitensis D82A mutant does not display the typical clumping phenotype observed in B.melitensis.</text>
</comment>
<reference key="1">
    <citation type="journal article" date="2005" name="Infect. Immun.">
        <title>Whole-genome analyses of speciation events in pathogenic Brucellae.</title>
        <authorList>
            <person name="Chain P.S."/>
            <person name="Comerci D.J."/>
            <person name="Tolmasky M.E."/>
            <person name="Larimer F.W."/>
            <person name="Malfatti S.A."/>
            <person name="Vergez L.M."/>
            <person name="Aguero F."/>
            <person name="Land M.L."/>
            <person name="Ugalde R.A."/>
            <person name="Garcia E."/>
        </authorList>
    </citation>
    <scope>NUCLEOTIDE SEQUENCE [LARGE SCALE GENOMIC DNA]</scope>
    <source>
        <strain>2308</strain>
    </source>
</reference>
<reference key="2">
    <citation type="journal article" date="2007" name="J. Bacteriol.">
        <title>Mutations of the quorum sensing-dependent regulator VjbR lead to drastic surface modifications in Brucella melitensis.</title>
        <authorList>
            <person name="Uzureau S."/>
            <person name="Godefroid M."/>
            <person name="Deschamps C."/>
            <person name="Lemaire J."/>
            <person name="De Bolle X."/>
            <person name="Letesson J.-J."/>
        </authorList>
    </citation>
    <scope>ABSENCE OF CLUMPING PHENOTYPE</scope>
</reference>
<reference key="3">
    <citation type="journal article" date="2012" name="PLoS ONE">
        <title>Expression of VjbR under nutrient limitation conditions is regulated at the post-transcriptional level by specific acidic pH values and urocanic acid.</title>
        <authorList>
            <person name="Arocena G.M."/>
            <person name="Zorreguieta A."/>
            <person name="Sieira R."/>
        </authorList>
    </citation>
    <scope>INDUCTION</scope>
    <source>
        <strain>2308</strain>
    </source>
</reference>
<reference key="4">
    <citation type="journal article" date="2017" name="Nucleic Acids Res.">
        <title>ChIP-seq analysis of the LuxR-type regulator VjbR reveals novel insights into the Brucella virulence gene expression network.</title>
        <authorList>
            <person name="Kleinman C.L."/>
            <person name="Sycz G."/>
            <person name="Bonomi H.R."/>
            <person name="Rodriguez R.M."/>
            <person name="Zorreguieta A."/>
            <person name="Sieira R."/>
        </authorList>
    </citation>
    <scope>FUNCTION</scope>
    <scope>DNA-BINDING</scope>
    <source>
        <strain>2308</strain>
    </source>
</reference>
<dbReference type="EMBL" id="AM040265">
    <property type="protein sequence ID" value="CAJ12284.1"/>
    <property type="molecule type" value="Genomic_DNA"/>
</dbReference>
<dbReference type="RefSeq" id="WP_002966460.1">
    <property type="nucleotide sequence ID" value="NZ_KN046823.1"/>
</dbReference>
<dbReference type="SMR" id="Q2YJ50"/>
<dbReference type="STRING" id="359391.BAB2_0118"/>
<dbReference type="GeneID" id="93015909"/>
<dbReference type="KEGG" id="bmf:BAB2_0118"/>
<dbReference type="PATRIC" id="fig|359391.11.peg.2065"/>
<dbReference type="HOGENOM" id="CLU_072786_7_0_5"/>
<dbReference type="PhylomeDB" id="Q2YJ50"/>
<dbReference type="PHI-base" id="PHI:7607"/>
<dbReference type="Proteomes" id="UP000002719">
    <property type="component" value="Chromosome II"/>
</dbReference>
<dbReference type="GO" id="GO:0003677">
    <property type="term" value="F:DNA binding"/>
    <property type="evidence" value="ECO:0007669"/>
    <property type="project" value="UniProtKB-KW"/>
</dbReference>
<dbReference type="GO" id="GO:0009372">
    <property type="term" value="P:quorum sensing"/>
    <property type="evidence" value="ECO:0007669"/>
    <property type="project" value="UniProtKB-KW"/>
</dbReference>
<dbReference type="GO" id="GO:0006355">
    <property type="term" value="P:regulation of DNA-templated transcription"/>
    <property type="evidence" value="ECO:0007669"/>
    <property type="project" value="InterPro"/>
</dbReference>
<dbReference type="CDD" id="cd06170">
    <property type="entry name" value="LuxR_C_like"/>
    <property type="match status" value="1"/>
</dbReference>
<dbReference type="Gene3D" id="3.30.450.80">
    <property type="entry name" value="Transcription factor LuxR-like, autoinducer-binding domain"/>
    <property type="match status" value="1"/>
</dbReference>
<dbReference type="Gene3D" id="1.10.10.10">
    <property type="entry name" value="Winged helix-like DNA-binding domain superfamily/Winged helix DNA-binding domain"/>
    <property type="match status" value="1"/>
</dbReference>
<dbReference type="InterPro" id="IPR016032">
    <property type="entry name" value="Sig_transdc_resp-reg_C-effctor"/>
</dbReference>
<dbReference type="InterPro" id="IPR005143">
    <property type="entry name" value="TF_LuxR_autoind-bd_dom"/>
</dbReference>
<dbReference type="InterPro" id="IPR036693">
    <property type="entry name" value="TF_LuxR_autoind-bd_dom_sf"/>
</dbReference>
<dbReference type="InterPro" id="IPR000792">
    <property type="entry name" value="Tscrpt_reg_LuxR_C"/>
</dbReference>
<dbReference type="InterPro" id="IPR036388">
    <property type="entry name" value="WH-like_DNA-bd_sf"/>
</dbReference>
<dbReference type="PANTHER" id="PTHR44688">
    <property type="entry name" value="DNA-BINDING TRANSCRIPTIONAL ACTIVATOR DEVR_DOSR"/>
    <property type="match status" value="1"/>
</dbReference>
<dbReference type="PANTHER" id="PTHR44688:SF16">
    <property type="entry name" value="DNA-BINDING TRANSCRIPTIONAL ACTIVATOR DEVR_DOSR"/>
    <property type="match status" value="1"/>
</dbReference>
<dbReference type="Pfam" id="PF03472">
    <property type="entry name" value="Autoind_bind"/>
    <property type="match status" value="1"/>
</dbReference>
<dbReference type="Pfam" id="PF00196">
    <property type="entry name" value="GerE"/>
    <property type="match status" value="1"/>
</dbReference>
<dbReference type="PRINTS" id="PR00038">
    <property type="entry name" value="HTHLUXR"/>
</dbReference>
<dbReference type="SMART" id="SM00421">
    <property type="entry name" value="HTH_LUXR"/>
    <property type="match status" value="1"/>
</dbReference>
<dbReference type="SUPFAM" id="SSF46894">
    <property type="entry name" value="C-terminal effector domain of the bipartite response regulators"/>
    <property type="match status" value="1"/>
</dbReference>
<dbReference type="SUPFAM" id="SSF75516">
    <property type="entry name" value="Pheromone-binding domain of LuxR-like quorum-sensing transcription factors"/>
    <property type="match status" value="1"/>
</dbReference>
<dbReference type="PROSITE" id="PS50043">
    <property type="entry name" value="HTH_LUXR_2"/>
    <property type="match status" value="1"/>
</dbReference>
<feature type="chain" id="PRO_0000319926" description="HTH-type quorum sensing-dependent transcriptional regulator VjbR">
    <location>
        <begin position="1"/>
        <end position="259"/>
    </location>
</feature>
<feature type="domain" description="HTH luxR-type" evidence="3">
    <location>
        <begin position="183"/>
        <end position="248"/>
    </location>
</feature>
<feature type="DNA-binding region" description="H-T-H motif" evidence="3">
    <location>
        <begin position="207"/>
        <end position="226"/>
    </location>
</feature>
<feature type="region of interest" description="C12-HSL binding" evidence="2">
    <location>
        <begin position="76"/>
        <end position="179"/>
    </location>
</feature>
<keyword id="KW-0238">DNA-binding</keyword>
<keyword id="KW-0673">Quorum sensing</keyword>
<keyword id="KW-1185">Reference proteome</keyword>
<keyword id="KW-0804">Transcription</keyword>
<keyword id="KW-0805">Transcription regulation</keyword>
<accession>Q2YJ50</accession>
<evidence type="ECO:0000250" key="1">
    <source>
        <dbReference type="UniProtKB" id="Q8YAY5"/>
    </source>
</evidence>
<evidence type="ECO:0000255" key="2"/>
<evidence type="ECO:0000255" key="3">
    <source>
        <dbReference type="PROSITE-ProRule" id="PRU00411"/>
    </source>
</evidence>
<evidence type="ECO:0000269" key="4">
    <source>
    </source>
</evidence>
<evidence type="ECO:0000269" key="5">
    <source>
    </source>
</evidence>
<evidence type="ECO:0000269" key="6">
    <source>
    </source>
</evidence>
<evidence type="ECO:0000305" key="7"/>
<sequence length="259" mass="28625">MSLDLVHFPNYKKTFFGSSFQSDTLALLTRIRDEIGCRYVTHTYRGRVGDCTKVNSADLTVLMTLPATWVARYSSKNYFAIDPVFQEDAPYYRNDTSAIARDLKEDADICPAVAELLHDAEKHGLGNLFIAVSARNPKGVAGCTVFTFEVEDEDRTQFLARMRPRLLSLAGIIHGTVCGCKDANSVASLLTPREVDCLRWAANGKTDGEIAEILSIARWTVVTYLQNAKIKLNCSNRTSAVATALSLGIIDMPEVQHLV</sequence>